<gene>
    <name evidence="1" type="primary">dnaK</name>
    <name type="ordered locus">Gura_0211</name>
</gene>
<accession>A5GDC8</accession>
<sequence length="635" mass="68213">MSKVIGIDLGTTNSCVAIMEGGEPIVIANAEGSRTTPSMVAITDSGERLVGQQAKRQAVTNPENTLFAIKRLIGRKFDSEAVKKDIAISPFKIVKADNGDAWVEVRGQKYSAPEISAMVLQKMKKTAEDYLGETVTDAVITVPAYFDDSQRQATKDAGKIAGLNVLRIINEPTAAALAYGLDKKKDEKIAVFDLGGGTFDISILELGEGVFEVKSTNGDTFLGGEDFDQDIIDWIAAEFKKDQGIDLRGDKMALQRLKEAAEKAKCELSTSLETDINLPFITADATGPKHLNLKLTRAKLEAICANLIAKLEGPCRTALKDAGLSPNDIDEVILVGGMTRMPIVQKKVQDIFGKVPNRSVNPDEVVAIGAAIQGGVLRGDVKDVLLLDVTPLSLGIETLGGVMTRLIEKNATIPCRKSQIFSTAADNQPAVSIHVLQGEREMSTDNKTLGNFELSGIPPAPRGVPQIEVTFDIDANGIVHVSAKDLGTGKEQSIRITASSGLSKEEIDKMVKDAEAHSSEDKKKRELIEARNQADSLAYSTEKSLKEFGDKIDAAEKQKIEDGLAALKKAMEGSDADAIKKASDELMQASHKLAEAVYAKAQPGEEQAGGAPHEGEAKDEKVVDADFEEVKEDKK</sequence>
<feature type="chain" id="PRO_1000079228" description="Chaperone protein DnaK">
    <location>
        <begin position="1"/>
        <end position="635"/>
    </location>
</feature>
<feature type="region of interest" description="Disordered" evidence="2">
    <location>
        <begin position="598"/>
        <end position="635"/>
    </location>
</feature>
<feature type="compositionally biased region" description="Basic and acidic residues" evidence="2">
    <location>
        <begin position="613"/>
        <end position="624"/>
    </location>
</feature>
<feature type="compositionally biased region" description="Acidic residues" evidence="2">
    <location>
        <begin position="625"/>
        <end position="635"/>
    </location>
</feature>
<feature type="modified residue" description="Phosphothreonine; by autocatalysis" evidence="1">
    <location>
        <position position="198"/>
    </location>
</feature>
<comment type="function">
    <text evidence="1">Acts as a chaperone.</text>
</comment>
<comment type="induction">
    <text evidence="1">By stress conditions e.g. heat shock.</text>
</comment>
<comment type="similarity">
    <text evidence="1">Belongs to the heat shock protein 70 family.</text>
</comment>
<keyword id="KW-0067">ATP-binding</keyword>
<keyword id="KW-0143">Chaperone</keyword>
<keyword id="KW-0547">Nucleotide-binding</keyword>
<keyword id="KW-0597">Phosphoprotein</keyword>
<keyword id="KW-1185">Reference proteome</keyword>
<keyword id="KW-0346">Stress response</keyword>
<protein>
    <recommendedName>
        <fullName evidence="1">Chaperone protein DnaK</fullName>
    </recommendedName>
    <alternativeName>
        <fullName evidence="1">HSP70</fullName>
    </alternativeName>
    <alternativeName>
        <fullName evidence="1">Heat shock 70 kDa protein</fullName>
    </alternativeName>
    <alternativeName>
        <fullName evidence="1">Heat shock protein 70</fullName>
    </alternativeName>
</protein>
<name>DNAK_GEOUR</name>
<reference key="1">
    <citation type="submission" date="2007-05" db="EMBL/GenBank/DDBJ databases">
        <title>Complete sequence of Geobacter uraniireducens Rf4.</title>
        <authorList>
            <consortium name="US DOE Joint Genome Institute"/>
            <person name="Copeland A."/>
            <person name="Lucas S."/>
            <person name="Lapidus A."/>
            <person name="Barry K."/>
            <person name="Detter J.C."/>
            <person name="Glavina del Rio T."/>
            <person name="Hammon N."/>
            <person name="Israni S."/>
            <person name="Dalin E."/>
            <person name="Tice H."/>
            <person name="Pitluck S."/>
            <person name="Chertkov O."/>
            <person name="Brettin T."/>
            <person name="Bruce D."/>
            <person name="Han C."/>
            <person name="Schmutz J."/>
            <person name="Larimer F."/>
            <person name="Land M."/>
            <person name="Hauser L."/>
            <person name="Kyrpides N."/>
            <person name="Mikhailova N."/>
            <person name="Shelobolina E."/>
            <person name="Aklujkar M."/>
            <person name="Lovley D."/>
            <person name="Richardson P."/>
        </authorList>
    </citation>
    <scope>NUCLEOTIDE SEQUENCE [LARGE SCALE GENOMIC DNA]</scope>
    <source>
        <strain>ATCC BAA-1134 / JCM 13001 / Rf4</strain>
    </source>
</reference>
<proteinExistence type="inferred from homology"/>
<organism>
    <name type="scientific">Geotalea uraniireducens (strain Rf4)</name>
    <name type="common">Geobacter uraniireducens</name>
    <dbReference type="NCBI Taxonomy" id="351605"/>
    <lineage>
        <taxon>Bacteria</taxon>
        <taxon>Pseudomonadati</taxon>
        <taxon>Thermodesulfobacteriota</taxon>
        <taxon>Desulfuromonadia</taxon>
        <taxon>Geobacterales</taxon>
        <taxon>Geobacteraceae</taxon>
        <taxon>Geotalea</taxon>
    </lineage>
</organism>
<dbReference type="EMBL" id="CP000698">
    <property type="protein sequence ID" value="ABQ24427.1"/>
    <property type="molecule type" value="Genomic_DNA"/>
</dbReference>
<dbReference type="RefSeq" id="WP_011937156.1">
    <property type="nucleotide sequence ID" value="NC_009483.1"/>
</dbReference>
<dbReference type="SMR" id="A5GDC8"/>
<dbReference type="STRING" id="351605.Gura_0211"/>
<dbReference type="KEGG" id="gur:Gura_0211"/>
<dbReference type="HOGENOM" id="CLU_005965_2_1_7"/>
<dbReference type="OrthoDB" id="9766019at2"/>
<dbReference type="Proteomes" id="UP000006695">
    <property type="component" value="Chromosome"/>
</dbReference>
<dbReference type="GO" id="GO:0005524">
    <property type="term" value="F:ATP binding"/>
    <property type="evidence" value="ECO:0007669"/>
    <property type="project" value="UniProtKB-UniRule"/>
</dbReference>
<dbReference type="GO" id="GO:0140662">
    <property type="term" value="F:ATP-dependent protein folding chaperone"/>
    <property type="evidence" value="ECO:0007669"/>
    <property type="project" value="InterPro"/>
</dbReference>
<dbReference type="GO" id="GO:0051082">
    <property type="term" value="F:unfolded protein binding"/>
    <property type="evidence" value="ECO:0007669"/>
    <property type="project" value="InterPro"/>
</dbReference>
<dbReference type="CDD" id="cd10234">
    <property type="entry name" value="ASKHA_NBD_HSP70_DnaK-like"/>
    <property type="match status" value="1"/>
</dbReference>
<dbReference type="FunFam" id="2.60.34.10:FF:000014">
    <property type="entry name" value="Chaperone protein DnaK HSP70"/>
    <property type="match status" value="1"/>
</dbReference>
<dbReference type="FunFam" id="3.30.420.40:FF:000020">
    <property type="entry name" value="Chaperone protein HscA homolog"/>
    <property type="match status" value="1"/>
</dbReference>
<dbReference type="FunFam" id="1.20.1270.10:FF:000001">
    <property type="entry name" value="Molecular chaperone DnaK"/>
    <property type="match status" value="1"/>
</dbReference>
<dbReference type="FunFam" id="3.30.420.40:FF:000004">
    <property type="entry name" value="Molecular chaperone DnaK"/>
    <property type="match status" value="1"/>
</dbReference>
<dbReference type="FunFam" id="3.90.640.10:FF:000003">
    <property type="entry name" value="Molecular chaperone DnaK"/>
    <property type="match status" value="1"/>
</dbReference>
<dbReference type="Gene3D" id="1.20.1270.10">
    <property type="match status" value="1"/>
</dbReference>
<dbReference type="Gene3D" id="3.30.420.40">
    <property type="match status" value="2"/>
</dbReference>
<dbReference type="Gene3D" id="3.90.640.10">
    <property type="entry name" value="Actin, Chain A, domain 4"/>
    <property type="match status" value="1"/>
</dbReference>
<dbReference type="Gene3D" id="2.60.34.10">
    <property type="entry name" value="Substrate Binding Domain Of DNAk, Chain A, domain 1"/>
    <property type="match status" value="1"/>
</dbReference>
<dbReference type="HAMAP" id="MF_00332">
    <property type="entry name" value="DnaK"/>
    <property type="match status" value="1"/>
</dbReference>
<dbReference type="InterPro" id="IPR043129">
    <property type="entry name" value="ATPase_NBD"/>
</dbReference>
<dbReference type="InterPro" id="IPR012725">
    <property type="entry name" value="Chaperone_DnaK"/>
</dbReference>
<dbReference type="InterPro" id="IPR018181">
    <property type="entry name" value="Heat_shock_70_CS"/>
</dbReference>
<dbReference type="InterPro" id="IPR029048">
    <property type="entry name" value="HSP70_C_sf"/>
</dbReference>
<dbReference type="InterPro" id="IPR029047">
    <property type="entry name" value="HSP70_peptide-bd_sf"/>
</dbReference>
<dbReference type="InterPro" id="IPR013126">
    <property type="entry name" value="Hsp_70_fam"/>
</dbReference>
<dbReference type="NCBIfam" id="NF001413">
    <property type="entry name" value="PRK00290.1"/>
    <property type="match status" value="1"/>
</dbReference>
<dbReference type="NCBIfam" id="NF003520">
    <property type="entry name" value="PRK05183.1"/>
    <property type="match status" value="1"/>
</dbReference>
<dbReference type="NCBIfam" id="TIGR02350">
    <property type="entry name" value="prok_dnaK"/>
    <property type="match status" value="1"/>
</dbReference>
<dbReference type="PANTHER" id="PTHR19375">
    <property type="entry name" value="HEAT SHOCK PROTEIN 70KDA"/>
    <property type="match status" value="1"/>
</dbReference>
<dbReference type="Pfam" id="PF00012">
    <property type="entry name" value="HSP70"/>
    <property type="match status" value="1"/>
</dbReference>
<dbReference type="PRINTS" id="PR00301">
    <property type="entry name" value="HEATSHOCK70"/>
</dbReference>
<dbReference type="SUPFAM" id="SSF53067">
    <property type="entry name" value="Actin-like ATPase domain"/>
    <property type="match status" value="2"/>
</dbReference>
<dbReference type="SUPFAM" id="SSF100934">
    <property type="entry name" value="Heat shock protein 70kD (HSP70), C-terminal subdomain"/>
    <property type="match status" value="1"/>
</dbReference>
<dbReference type="SUPFAM" id="SSF100920">
    <property type="entry name" value="Heat shock protein 70kD (HSP70), peptide-binding domain"/>
    <property type="match status" value="1"/>
</dbReference>
<dbReference type="PROSITE" id="PS00297">
    <property type="entry name" value="HSP70_1"/>
    <property type="match status" value="1"/>
</dbReference>
<dbReference type="PROSITE" id="PS00329">
    <property type="entry name" value="HSP70_2"/>
    <property type="match status" value="1"/>
</dbReference>
<dbReference type="PROSITE" id="PS01036">
    <property type="entry name" value="HSP70_3"/>
    <property type="match status" value="1"/>
</dbReference>
<evidence type="ECO:0000255" key="1">
    <source>
        <dbReference type="HAMAP-Rule" id="MF_00332"/>
    </source>
</evidence>
<evidence type="ECO:0000256" key="2">
    <source>
        <dbReference type="SAM" id="MobiDB-lite"/>
    </source>
</evidence>